<gene>
    <name type="ordered locus">SACOL2177</name>
</gene>
<name>ZDH1_STAAC</name>
<sequence>MKMIGFEKPFKLEEGNLFKVYEQRKPTPENDDILVKVNSISVNPVDTKQRQMEVTQAPRVLGFDAIGTVEAIGPDVTLFSPGDVVFYAGSPNRQGSNATYQLVSEAIVAKAPHNISANEAVSLPLTGITAYETFFDTFKISTNPAENEGKSVLIINGAGGVGSIATQIAKRYGLTVITTASRQETTEWCEKMGADIVLNHKEDLVRQFKEIPLVDYIFCTYNTDLYYNTMIELIKPLGHITTIVAFNEDQDLNALKLKSITFTHEFMFARPIHRTPDMIKQHEYLEDITKNIESGHYQPTTTQVFEGLSPENLYQAHQLLEKQSMIGKLVINI</sequence>
<protein>
    <recommendedName>
        <fullName>Zinc-type alcohol dehydrogenase-like protein SACOL2177</fullName>
    </recommendedName>
</protein>
<evidence type="ECO:0000305" key="1"/>
<proteinExistence type="inferred from homology"/>
<reference key="1">
    <citation type="journal article" date="2005" name="J. Bacteriol.">
        <title>Insights on evolution of virulence and resistance from the complete genome analysis of an early methicillin-resistant Staphylococcus aureus strain and a biofilm-producing methicillin-resistant Staphylococcus epidermidis strain.</title>
        <authorList>
            <person name="Gill S.R."/>
            <person name="Fouts D.E."/>
            <person name="Archer G.L."/>
            <person name="Mongodin E.F."/>
            <person name="DeBoy R.T."/>
            <person name="Ravel J."/>
            <person name="Paulsen I.T."/>
            <person name="Kolonay J.F."/>
            <person name="Brinkac L.M."/>
            <person name="Beanan M.J."/>
            <person name="Dodson R.J."/>
            <person name="Daugherty S.C."/>
            <person name="Madupu R."/>
            <person name="Angiuoli S.V."/>
            <person name="Durkin A.S."/>
            <person name="Haft D.H."/>
            <person name="Vamathevan J.J."/>
            <person name="Khouri H."/>
            <person name="Utterback T.R."/>
            <person name="Lee C."/>
            <person name="Dimitrov G."/>
            <person name="Jiang L."/>
            <person name="Qin H."/>
            <person name="Weidman J."/>
            <person name="Tran K."/>
            <person name="Kang K.H."/>
            <person name="Hance I.R."/>
            <person name="Nelson K.E."/>
            <person name="Fraser C.M."/>
        </authorList>
    </citation>
    <scope>NUCLEOTIDE SEQUENCE [LARGE SCALE GENOMIC DNA]</scope>
    <source>
        <strain>COL</strain>
    </source>
</reference>
<comment type="similarity">
    <text evidence="1">Belongs to the zinc-containing alcohol dehydrogenase family. Quinone oxidoreductase subfamily.</text>
</comment>
<dbReference type="EMBL" id="CP000046">
    <property type="protein sequence ID" value="AAW38483.1"/>
    <property type="molecule type" value="Genomic_DNA"/>
</dbReference>
<dbReference type="RefSeq" id="WP_000781945.1">
    <property type="nucleotide sequence ID" value="NZ_JBGOFO010000004.1"/>
</dbReference>
<dbReference type="SMR" id="Q5HE19"/>
<dbReference type="KEGG" id="sac:SACOL2177"/>
<dbReference type="HOGENOM" id="CLU_026673_3_0_9"/>
<dbReference type="Proteomes" id="UP000000530">
    <property type="component" value="Chromosome"/>
</dbReference>
<dbReference type="GO" id="GO:0016491">
    <property type="term" value="F:oxidoreductase activity"/>
    <property type="evidence" value="ECO:0007669"/>
    <property type="project" value="UniProtKB-KW"/>
</dbReference>
<dbReference type="GO" id="GO:0008270">
    <property type="term" value="F:zinc ion binding"/>
    <property type="evidence" value="ECO:0007669"/>
    <property type="project" value="InterPro"/>
</dbReference>
<dbReference type="CDD" id="cd08252">
    <property type="entry name" value="AL_MDR"/>
    <property type="match status" value="1"/>
</dbReference>
<dbReference type="Gene3D" id="3.90.180.10">
    <property type="entry name" value="Medium-chain alcohol dehydrogenases, catalytic domain"/>
    <property type="match status" value="1"/>
</dbReference>
<dbReference type="Gene3D" id="3.40.50.720">
    <property type="entry name" value="NAD(P)-binding Rossmann-like Domain"/>
    <property type="match status" value="1"/>
</dbReference>
<dbReference type="InterPro" id="IPR013149">
    <property type="entry name" value="ADH-like_C"/>
</dbReference>
<dbReference type="InterPro" id="IPR013154">
    <property type="entry name" value="ADH-like_N"/>
</dbReference>
<dbReference type="InterPro" id="IPR014182">
    <property type="entry name" value="ADH_Zn_typ-1"/>
</dbReference>
<dbReference type="InterPro" id="IPR011032">
    <property type="entry name" value="GroES-like_sf"/>
</dbReference>
<dbReference type="InterPro" id="IPR036291">
    <property type="entry name" value="NAD(P)-bd_dom_sf"/>
</dbReference>
<dbReference type="InterPro" id="IPR020843">
    <property type="entry name" value="PKS_ER"/>
</dbReference>
<dbReference type="InterPro" id="IPR002364">
    <property type="entry name" value="Quin_OxRdtase/zeta-crystal_CS"/>
</dbReference>
<dbReference type="InterPro" id="IPR050700">
    <property type="entry name" value="YIM1/Zinc_Alcohol_DH_Fams"/>
</dbReference>
<dbReference type="NCBIfam" id="TIGR02817">
    <property type="entry name" value="adh_fam_1"/>
    <property type="match status" value="1"/>
</dbReference>
<dbReference type="PANTHER" id="PTHR11695">
    <property type="entry name" value="ALCOHOL DEHYDROGENASE RELATED"/>
    <property type="match status" value="1"/>
</dbReference>
<dbReference type="PANTHER" id="PTHR11695:SF294">
    <property type="entry name" value="RETICULON-4-INTERACTING PROTEIN 1, MITOCHONDRIAL"/>
    <property type="match status" value="1"/>
</dbReference>
<dbReference type="Pfam" id="PF08240">
    <property type="entry name" value="ADH_N"/>
    <property type="match status" value="1"/>
</dbReference>
<dbReference type="Pfam" id="PF00107">
    <property type="entry name" value="ADH_zinc_N"/>
    <property type="match status" value="1"/>
</dbReference>
<dbReference type="SMART" id="SM00829">
    <property type="entry name" value="PKS_ER"/>
    <property type="match status" value="1"/>
</dbReference>
<dbReference type="SUPFAM" id="SSF50129">
    <property type="entry name" value="GroES-like"/>
    <property type="match status" value="1"/>
</dbReference>
<dbReference type="SUPFAM" id="SSF51735">
    <property type="entry name" value="NAD(P)-binding Rossmann-fold domains"/>
    <property type="match status" value="1"/>
</dbReference>
<dbReference type="PROSITE" id="PS01162">
    <property type="entry name" value="QOR_ZETA_CRYSTAL"/>
    <property type="match status" value="1"/>
</dbReference>
<organism>
    <name type="scientific">Staphylococcus aureus (strain COL)</name>
    <dbReference type="NCBI Taxonomy" id="93062"/>
    <lineage>
        <taxon>Bacteria</taxon>
        <taxon>Bacillati</taxon>
        <taxon>Bacillota</taxon>
        <taxon>Bacilli</taxon>
        <taxon>Bacillales</taxon>
        <taxon>Staphylococcaceae</taxon>
        <taxon>Staphylococcus</taxon>
    </lineage>
</organism>
<accession>Q5HE19</accession>
<keyword id="KW-0479">Metal-binding</keyword>
<keyword id="KW-0560">Oxidoreductase</keyword>
<keyword id="KW-0862">Zinc</keyword>
<feature type="chain" id="PRO_0000160926" description="Zinc-type alcohol dehydrogenase-like protein SACOL2177">
    <location>
        <begin position="1"/>
        <end position="333"/>
    </location>
</feature>